<dbReference type="EC" id="6.1.1.16" evidence="1"/>
<dbReference type="EMBL" id="CP000248">
    <property type="protein sequence ID" value="ABD26817.1"/>
    <property type="molecule type" value="Genomic_DNA"/>
</dbReference>
<dbReference type="RefSeq" id="WP_011446023.1">
    <property type="nucleotide sequence ID" value="NC_007794.1"/>
</dbReference>
<dbReference type="SMR" id="Q2G5Q6"/>
<dbReference type="STRING" id="279238.Saro_2381"/>
<dbReference type="KEGG" id="nar:Saro_2381"/>
<dbReference type="eggNOG" id="COG0215">
    <property type="taxonomic scope" value="Bacteria"/>
</dbReference>
<dbReference type="HOGENOM" id="CLU_013528_0_1_5"/>
<dbReference type="Proteomes" id="UP000009134">
    <property type="component" value="Chromosome"/>
</dbReference>
<dbReference type="GO" id="GO:0005829">
    <property type="term" value="C:cytosol"/>
    <property type="evidence" value="ECO:0007669"/>
    <property type="project" value="TreeGrafter"/>
</dbReference>
<dbReference type="GO" id="GO:0005524">
    <property type="term" value="F:ATP binding"/>
    <property type="evidence" value="ECO:0007669"/>
    <property type="project" value="UniProtKB-UniRule"/>
</dbReference>
<dbReference type="GO" id="GO:0004817">
    <property type="term" value="F:cysteine-tRNA ligase activity"/>
    <property type="evidence" value="ECO:0007669"/>
    <property type="project" value="UniProtKB-UniRule"/>
</dbReference>
<dbReference type="GO" id="GO:0008270">
    <property type="term" value="F:zinc ion binding"/>
    <property type="evidence" value="ECO:0007669"/>
    <property type="project" value="UniProtKB-UniRule"/>
</dbReference>
<dbReference type="GO" id="GO:0006423">
    <property type="term" value="P:cysteinyl-tRNA aminoacylation"/>
    <property type="evidence" value="ECO:0007669"/>
    <property type="project" value="UniProtKB-UniRule"/>
</dbReference>
<dbReference type="CDD" id="cd00672">
    <property type="entry name" value="CysRS_core"/>
    <property type="match status" value="1"/>
</dbReference>
<dbReference type="Gene3D" id="1.20.120.1910">
    <property type="entry name" value="Cysteine-tRNA ligase, C-terminal anti-codon recognition domain"/>
    <property type="match status" value="1"/>
</dbReference>
<dbReference type="Gene3D" id="3.40.50.620">
    <property type="entry name" value="HUPs"/>
    <property type="match status" value="1"/>
</dbReference>
<dbReference type="HAMAP" id="MF_00041">
    <property type="entry name" value="Cys_tRNA_synth"/>
    <property type="match status" value="1"/>
</dbReference>
<dbReference type="InterPro" id="IPR015803">
    <property type="entry name" value="Cys-tRNA-ligase"/>
</dbReference>
<dbReference type="InterPro" id="IPR015273">
    <property type="entry name" value="Cys-tRNA-synt_Ia_DALR"/>
</dbReference>
<dbReference type="InterPro" id="IPR024909">
    <property type="entry name" value="Cys-tRNA/MSH_ligase"/>
</dbReference>
<dbReference type="InterPro" id="IPR056411">
    <property type="entry name" value="CysS_C"/>
</dbReference>
<dbReference type="InterPro" id="IPR014729">
    <property type="entry name" value="Rossmann-like_a/b/a_fold"/>
</dbReference>
<dbReference type="InterPro" id="IPR032678">
    <property type="entry name" value="tRNA-synt_1_cat_dom"/>
</dbReference>
<dbReference type="InterPro" id="IPR009080">
    <property type="entry name" value="tRNAsynth_Ia_anticodon-bd"/>
</dbReference>
<dbReference type="NCBIfam" id="TIGR00435">
    <property type="entry name" value="cysS"/>
    <property type="match status" value="1"/>
</dbReference>
<dbReference type="PANTHER" id="PTHR10890:SF3">
    <property type="entry name" value="CYSTEINE--TRNA LIGASE, CYTOPLASMIC"/>
    <property type="match status" value="1"/>
</dbReference>
<dbReference type="PANTHER" id="PTHR10890">
    <property type="entry name" value="CYSTEINYL-TRNA SYNTHETASE"/>
    <property type="match status" value="1"/>
</dbReference>
<dbReference type="Pfam" id="PF23493">
    <property type="entry name" value="CysS_C"/>
    <property type="match status" value="1"/>
</dbReference>
<dbReference type="Pfam" id="PF01406">
    <property type="entry name" value="tRNA-synt_1e"/>
    <property type="match status" value="1"/>
</dbReference>
<dbReference type="PRINTS" id="PR00983">
    <property type="entry name" value="TRNASYNTHCYS"/>
</dbReference>
<dbReference type="SMART" id="SM00840">
    <property type="entry name" value="DALR_2"/>
    <property type="match status" value="1"/>
</dbReference>
<dbReference type="SUPFAM" id="SSF47323">
    <property type="entry name" value="Anticodon-binding domain of a subclass of class I aminoacyl-tRNA synthetases"/>
    <property type="match status" value="1"/>
</dbReference>
<dbReference type="SUPFAM" id="SSF52374">
    <property type="entry name" value="Nucleotidylyl transferase"/>
    <property type="match status" value="1"/>
</dbReference>
<proteinExistence type="inferred from homology"/>
<keyword id="KW-0030">Aminoacyl-tRNA synthetase</keyword>
<keyword id="KW-0067">ATP-binding</keyword>
<keyword id="KW-0963">Cytoplasm</keyword>
<keyword id="KW-0436">Ligase</keyword>
<keyword id="KW-0479">Metal-binding</keyword>
<keyword id="KW-0547">Nucleotide-binding</keyword>
<keyword id="KW-0648">Protein biosynthesis</keyword>
<keyword id="KW-1185">Reference proteome</keyword>
<keyword id="KW-0862">Zinc</keyword>
<protein>
    <recommendedName>
        <fullName evidence="1">Cysteine--tRNA ligase</fullName>
        <ecNumber evidence="1">6.1.1.16</ecNumber>
    </recommendedName>
    <alternativeName>
        <fullName evidence="1">Cysteinyl-tRNA synthetase</fullName>
        <shortName evidence="1">CysRS</shortName>
    </alternativeName>
</protein>
<gene>
    <name evidence="1" type="primary">cysS</name>
    <name type="ordered locus">Saro_2381</name>
</gene>
<comment type="catalytic activity">
    <reaction evidence="1">
        <text>tRNA(Cys) + L-cysteine + ATP = L-cysteinyl-tRNA(Cys) + AMP + diphosphate</text>
        <dbReference type="Rhea" id="RHEA:17773"/>
        <dbReference type="Rhea" id="RHEA-COMP:9661"/>
        <dbReference type="Rhea" id="RHEA-COMP:9679"/>
        <dbReference type="ChEBI" id="CHEBI:30616"/>
        <dbReference type="ChEBI" id="CHEBI:33019"/>
        <dbReference type="ChEBI" id="CHEBI:35235"/>
        <dbReference type="ChEBI" id="CHEBI:78442"/>
        <dbReference type="ChEBI" id="CHEBI:78517"/>
        <dbReference type="ChEBI" id="CHEBI:456215"/>
        <dbReference type="EC" id="6.1.1.16"/>
    </reaction>
</comment>
<comment type="cofactor">
    <cofactor evidence="1">
        <name>Zn(2+)</name>
        <dbReference type="ChEBI" id="CHEBI:29105"/>
    </cofactor>
    <text evidence="1">Binds 1 zinc ion per subunit.</text>
</comment>
<comment type="subunit">
    <text evidence="1">Monomer.</text>
</comment>
<comment type="subcellular location">
    <subcellularLocation>
        <location evidence="1">Cytoplasm</location>
    </subcellularLocation>
</comment>
<comment type="similarity">
    <text evidence="1">Belongs to the class-I aminoacyl-tRNA synthetase family.</text>
</comment>
<name>SYC_NOVAD</name>
<accession>Q2G5Q6</accession>
<sequence>MSVHAPAPFAPSAPLRLFNSLTRQLEAFQPVHAGEARVYSCGPTVYNYPHIGNMRAYVFADLLGRTLSFKGLKLTHVINITDVGHLTDDADEGEDKMEKMARAEARSIWDIAKHYTQAYWEDVKALNIRQPARWTIATEYVPQMIAFAERIAAKHCYELDSGLYFDVSTVADYGRLARAQTEEGEGRIEAVEGKRNGADFAIWRKTPPGEKRQMEWDSPWGRGAPGWHLECSVMSGEVLGFPFDIHTGGIDHREIHHPNEIAQNQAFCCTNGLDVPANSGARIWMHNNFLVERSGKMSKSSGEFLRLQLLIDKGYHPLAYRLMCLQAHYRSELEFSWEGLGAALTRLKRMLIAVGQLKERAPEVAAQPGPRFTPFLERFDAAMSDDLNTAVALTVFEEVLGLKKVDPADKLAAVAAMDAVLGLGLLELDRRALRIRPKGVEIDEAGIEALLDARKAARAEKDFARSDALRDQIAAKGVEVMDGDPLGWEWKLA</sequence>
<feature type="chain" id="PRO_0000240929" description="Cysteine--tRNA ligase">
    <location>
        <begin position="1"/>
        <end position="493"/>
    </location>
</feature>
<feature type="short sequence motif" description="'HIGH' region">
    <location>
        <begin position="43"/>
        <end position="53"/>
    </location>
</feature>
<feature type="short sequence motif" description="'KMSKS' region">
    <location>
        <begin position="296"/>
        <end position="300"/>
    </location>
</feature>
<feature type="binding site" evidence="1">
    <location>
        <position position="41"/>
    </location>
    <ligand>
        <name>Zn(2+)</name>
        <dbReference type="ChEBI" id="CHEBI:29105"/>
    </ligand>
</feature>
<feature type="binding site" evidence="1">
    <location>
        <position position="231"/>
    </location>
    <ligand>
        <name>Zn(2+)</name>
        <dbReference type="ChEBI" id="CHEBI:29105"/>
    </ligand>
</feature>
<feature type="binding site" evidence="1">
    <location>
        <position position="256"/>
    </location>
    <ligand>
        <name>Zn(2+)</name>
        <dbReference type="ChEBI" id="CHEBI:29105"/>
    </ligand>
</feature>
<feature type="binding site" evidence="1">
    <location>
        <position position="260"/>
    </location>
    <ligand>
        <name>Zn(2+)</name>
        <dbReference type="ChEBI" id="CHEBI:29105"/>
    </ligand>
</feature>
<feature type="binding site" evidence="1">
    <location>
        <position position="299"/>
    </location>
    <ligand>
        <name>ATP</name>
        <dbReference type="ChEBI" id="CHEBI:30616"/>
    </ligand>
</feature>
<evidence type="ECO:0000255" key="1">
    <source>
        <dbReference type="HAMAP-Rule" id="MF_00041"/>
    </source>
</evidence>
<organism>
    <name type="scientific">Novosphingobium aromaticivorans (strain ATCC 700278 / DSM 12444 / CCUG 56034 / CIP 105152 / NBRC 16084 / F199)</name>
    <dbReference type="NCBI Taxonomy" id="279238"/>
    <lineage>
        <taxon>Bacteria</taxon>
        <taxon>Pseudomonadati</taxon>
        <taxon>Pseudomonadota</taxon>
        <taxon>Alphaproteobacteria</taxon>
        <taxon>Sphingomonadales</taxon>
        <taxon>Sphingomonadaceae</taxon>
        <taxon>Novosphingobium</taxon>
    </lineage>
</organism>
<reference key="1">
    <citation type="submission" date="2006-01" db="EMBL/GenBank/DDBJ databases">
        <title>Complete sequence of Novosphingobium aromaticivorans DSM 12444.</title>
        <authorList>
            <consortium name="US DOE Joint Genome Institute"/>
            <person name="Copeland A."/>
            <person name="Lucas S."/>
            <person name="Lapidus A."/>
            <person name="Barry K."/>
            <person name="Detter J.C."/>
            <person name="Glavina T."/>
            <person name="Hammon N."/>
            <person name="Israni S."/>
            <person name="Pitluck S."/>
            <person name="Chain P."/>
            <person name="Malfatti S."/>
            <person name="Shin M."/>
            <person name="Vergez L."/>
            <person name="Schmutz J."/>
            <person name="Larimer F."/>
            <person name="Land M."/>
            <person name="Kyrpides N."/>
            <person name="Ivanova N."/>
            <person name="Fredrickson J."/>
            <person name="Balkwill D."/>
            <person name="Romine M.F."/>
            <person name="Richardson P."/>
        </authorList>
    </citation>
    <scope>NUCLEOTIDE SEQUENCE [LARGE SCALE GENOMIC DNA]</scope>
    <source>
        <strain>ATCC 700278 / DSM 12444 / CCUG 56034 / CIP 105152 / NBRC 16084 / F199</strain>
    </source>
</reference>